<dbReference type="EMBL" id="EU262889">
    <property type="protein sequence ID" value="ABW98892.1"/>
    <property type="molecule type" value="Genomic_DNA"/>
</dbReference>
<dbReference type="RefSeq" id="YP_001687387.1">
    <property type="nucleotide sequence ID" value="NC_010361.1"/>
</dbReference>
<dbReference type="SMR" id="B0Z4Y0"/>
<dbReference type="GeneID" id="5952022"/>
<dbReference type="GO" id="GO:0009535">
    <property type="term" value="C:chloroplast thylakoid membrane"/>
    <property type="evidence" value="ECO:0007669"/>
    <property type="project" value="UniProtKB-SubCell"/>
</dbReference>
<dbReference type="GO" id="GO:0009522">
    <property type="term" value="C:photosystem I"/>
    <property type="evidence" value="ECO:0007669"/>
    <property type="project" value="UniProtKB-KW"/>
</dbReference>
<dbReference type="GO" id="GO:0015979">
    <property type="term" value="P:photosynthesis"/>
    <property type="evidence" value="ECO:0007669"/>
    <property type="project" value="UniProtKB-UniRule"/>
</dbReference>
<dbReference type="FunFam" id="1.20.5.510:FF:000001">
    <property type="entry name" value="Photosystem I reaction center subunit IX"/>
    <property type="match status" value="1"/>
</dbReference>
<dbReference type="Gene3D" id="1.20.5.510">
    <property type="entry name" value="Single helix bin"/>
    <property type="match status" value="1"/>
</dbReference>
<dbReference type="HAMAP" id="MF_00522">
    <property type="entry name" value="PSI_PsaJ"/>
    <property type="match status" value="1"/>
</dbReference>
<dbReference type="InterPro" id="IPR002615">
    <property type="entry name" value="PSI_PsaJ"/>
</dbReference>
<dbReference type="InterPro" id="IPR036062">
    <property type="entry name" value="PSI_PsaJ_sf"/>
</dbReference>
<dbReference type="PANTHER" id="PTHR36082">
    <property type="match status" value="1"/>
</dbReference>
<dbReference type="PANTHER" id="PTHR36082:SF2">
    <property type="entry name" value="PHOTOSYSTEM I REACTION CENTER SUBUNIT IX"/>
    <property type="match status" value="1"/>
</dbReference>
<dbReference type="Pfam" id="PF01701">
    <property type="entry name" value="PSI_PsaJ"/>
    <property type="match status" value="1"/>
</dbReference>
<dbReference type="SUPFAM" id="SSF81544">
    <property type="entry name" value="Subunit IX of photosystem I reaction centre, PsaJ"/>
    <property type="match status" value="1"/>
</dbReference>
<geneLocation type="chloroplast"/>
<reference key="1">
    <citation type="journal article" date="2008" name="Nucleic Acids Res.">
        <title>The complete nucleotide sequences of the five genetically distinct plastid genomes of Oenothera, subsection Oenothera: I. Sequence evaluation and plastome evolution.</title>
        <authorList>
            <person name="Greiner S."/>
            <person name="Wang X."/>
            <person name="Rauwolf U."/>
            <person name="Silber M.V."/>
            <person name="Mayer K."/>
            <person name="Meurer J."/>
            <person name="Haberer G."/>
            <person name="Herrmann R.G."/>
        </authorList>
    </citation>
    <scope>NUCLEOTIDE SEQUENCE [LARGE SCALE GENOMIC DNA]</scope>
    <source>
        <strain>cv. Suaveolens Grado</strain>
    </source>
</reference>
<evidence type="ECO:0000255" key="1">
    <source>
        <dbReference type="HAMAP-Rule" id="MF_00522"/>
    </source>
</evidence>
<proteinExistence type="inferred from homology"/>
<gene>
    <name evidence="1" type="primary">psaJ</name>
</gene>
<accession>B0Z4Y0</accession>
<name>PSAJ_OENBI</name>
<comment type="function">
    <text evidence="1">May help in the organization of the PsaE and PsaF subunits.</text>
</comment>
<comment type="subcellular location">
    <subcellularLocation>
        <location evidence="1">Plastid</location>
        <location evidence="1">Chloroplast thylakoid membrane</location>
        <topology evidence="1">Single-pass membrane protein</topology>
    </subcellularLocation>
</comment>
<comment type="similarity">
    <text evidence="1">Belongs to the PsaJ family.</text>
</comment>
<feature type="chain" id="PRO_0000354163" description="Photosystem I reaction center subunit IX">
    <location>
        <begin position="1"/>
        <end position="43"/>
    </location>
</feature>
<feature type="transmembrane region" description="Helical" evidence="1">
    <location>
        <begin position="7"/>
        <end position="27"/>
    </location>
</feature>
<sequence>MRDLKTYLSVAPVLSALWFGALAGLLIEINRFFPDALTFPFFS</sequence>
<protein>
    <recommendedName>
        <fullName evidence="1">Photosystem I reaction center subunit IX</fullName>
    </recommendedName>
    <alternativeName>
        <fullName evidence="1">PSI-J</fullName>
    </alternativeName>
</protein>
<keyword id="KW-0150">Chloroplast</keyword>
<keyword id="KW-0472">Membrane</keyword>
<keyword id="KW-0602">Photosynthesis</keyword>
<keyword id="KW-0603">Photosystem I</keyword>
<keyword id="KW-0934">Plastid</keyword>
<keyword id="KW-0793">Thylakoid</keyword>
<keyword id="KW-0812">Transmembrane</keyword>
<keyword id="KW-1133">Transmembrane helix</keyword>
<organism>
    <name type="scientific">Oenothera biennis</name>
    <name type="common">German evening primrose</name>
    <name type="synonym">Onagra biennis</name>
    <dbReference type="NCBI Taxonomy" id="3942"/>
    <lineage>
        <taxon>Eukaryota</taxon>
        <taxon>Viridiplantae</taxon>
        <taxon>Streptophyta</taxon>
        <taxon>Embryophyta</taxon>
        <taxon>Tracheophyta</taxon>
        <taxon>Spermatophyta</taxon>
        <taxon>Magnoliopsida</taxon>
        <taxon>eudicotyledons</taxon>
        <taxon>Gunneridae</taxon>
        <taxon>Pentapetalae</taxon>
        <taxon>rosids</taxon>
        <taxon>malvids</taxon>
        <taxon>Myrtales</taxon>
        <taxon>Onagraceae</taxon>
        <taxon>Onagroideae</taxon>
        <taxon>Onagreae</taxon>
        <taxon>Oenothera</taxon>
    </lineage>
</organism>